<organism>
    <name type="scientific">Staphylococcus aureus (strain COL)</name>
    <dbReference type="NCBI Taxonomy" id="93062"/>
    <lineage>
        <taxon>Bacteria</taxon>
        <taxon>Bacillati</taxon>
        <taxon>Bacillota</taxon>
        <taxon>Bacilli</taxon>
        <taxon>Bacillales</taxon>
        <taxon>Staphylococcaceae</taxon>
        <taxon>Staphylococcus</taxon>
    </lineage>
</organism>
<protein>
    <recommendedName>
        <fullName evidence="1">Formimidoylglutamase</fullName>
        <ecNumber evidence="1">3.5.3.8</ecNumber>
    </recommendedName>
    <alternativeName>
        <fullName evidence="1">Formiminoglutamase</fullName>
    </alternativeName>
    <alternativeName>
        <fullName evidence="1">Formiminoglutamate hydrolase</fullName>
    </alternativeName>
</protein>
<dbReference type="EC" id="3.5.3.8" evidence="1"/>
<dbReference type="EMBL" id="CP000046">
    <property type="protein sequence ID" value="AAW37156.1"/>
    <property type="molecule type" value="Genomic_DNA"/>
</dbReference>
<dbReference type="RefSeq" id="WP_000277968.1">
    <property type="nucleotide sequence ID" value="NZ_JBGOFO010000004.1"/>
</dbReference>
<dbReference type="SMR" id="Q5HDM3"/>
<dbReference type="KEGG" id="sac:SACOL2327"/>
<dbReference type="HOGENOM" id="CLU_039478_2_0_9"/>
<dbReference type="UniPathway" id="UPA00379">
    <property type="reaction ID" value="UER00552"/>
</dbReference>
<dbReference type="Proteomes" id="UP000000530">
    <property type="component" value="Chromosome"/>
</dbReference>
<dbReference type="GO" id="GO:0008783">
    <property type="term" value="F:agmatinase activity"/>
    <property type="evidence" value="ECO:0007669"/>
    <property type="project" value="TreeGrafter"/>
</dbReference>
<dbReference type="GO" id="GO:0050415">
    <property type="term" value="F:formimidoylglutamase activity"/>
    <property type="evidence" value="ECO:0007669"/>
    <property type="project" value="UniProtKB-UniRule"/>
</dbReference>
<dbReference type="GO" id="GO:0030145">
    <property type="term" value="F:manganese ion binding"/>
    <property type="evidence" value="ECO:0007669"/>
    <property type="project" value="UniProtKB-UniRule"/>
</dbReference>
<dbReference type="GO" id="GO:0019556">
    <property type="term" value="P:L-histidine catabolic process to glutamate and formamide"/>
    <property type="evidence" value="ECO:0007669"/>
    <property type="project" value="UniProtKB-UniPathway"/>
</dbReference>
<dbReference type="GO" id="GO:0019557">
    <property type="term" value="P:L-histidine catabolic process to glutamate and formate"/>
    <property type="evidence" value="ECO:0007669"/>
    <property type="project" value="UniProtKB-UniPathway"/>
</dbReference>
<dbReference type="GO" id="GO:0033389">
    <property type="term" value="P:putrescine biosynthetic process from arginine, via agmatine"/>
    <property type="evidence" value="ECO:0007669"/>
    <property type="project" value="TreeGrafter"/>
</dbReference>
<dbReference type="CDD" id="cd09988">
    <property type="entry name" value="Formimidoylglutamase"/>
    <property type="match status" value="1"/>
</dbReference>
<dbReference type="FunFam" id="3.40.800.10:FF:000015">
    <property type="entry name" value="Formimidoylglutamase"/>
    <property type="match status" value="1"/>
</dbReference>
<dbReference type="Gene3D" id="3.40.800.10">
    <property type="entry name" value="Ureohydrolase domain"/>
    <property type="match status" value="1"/>
</dbReference>
<dbReference type="HAMAP" id="MF_00737">
    <property type="entry name" value="Formimidoylglutam"/>
    <property type="match status" value="1"/>
</dbReference>
<dbReference type="InterPro" id="IPR005923">
    <property type="entry name" value="HutG"/>
</dbReference>
<dbReference type="InterPro" id="IPR006035">
    <property type="entry name" value="Ureohydrolase"/>
</dbReference>
<dbReference type="InterPro" id="IPR023696">
    <property type="entry name" value="Ureohydrolase_dom_sf"/>
</dbReference>
<dbReference type="NCBIfam" id="TIGR01227">
    <property type="entry name" value="hutG"/>
    <property type="match status" value="1"/>
</dbReference>
<dbReference type="PANTHER" id="PTHR11358">
    <property type="entry name" value="ARGINASE/AGMATINASE"/>
    <property type="match status" value="1"/>
</dbReference>
<dbReference type="PANTHER" id="PTHR11358:SF35">
    <property type="entry name" value="FORMIMIDOYLGLUTAMASE"/>
    <property type="match status" value="1"/>
</dbReference>
<dbReference type="Pfam" id="PF00491">
    <property type="entry name" value="Arginase"/>
    <property type="match status" value="1"/>
</dbReference>
<dbReference type="PIRSF" id="PIRSF036979">
    <property type="entry name" value="Arginase"/>
    <property type="match status" value="1"/>
</dbReference>
<dbReference type="SUPFAM" id="SSF52768">
    <property type="entry name" value="Arginase/deacetylase"/>
    <property type="match status" value="1"/>
</dbReference>
<dbReference type="PROSITE" id="PS51409">
    <property type="entry name" value="ARGINASE_2"/>
    <property type="match status" value="1"/>
</dbReference>
<keyword id="KW-0369">Histidine metabolism</keyword>
<keyword id="KW-0378">Hydrolase</keyword>
<keyword id="KW-0464">Manganese</keyword>
<keyword id="KW-0479">Metal-binding</keyword>
<gene>
    <name evidence="1" type="primary">hutG</name>
    <name type="ordered locus">SACOL2327</name>
</gene>
<name>HUTG_STAAC</name>
<proteinExistence type="inferred from homology"/>
<accession>Q5HDM3</accession>
<feature type="chain" id="PRO_0000173766" description="Formimidoylglutamase">
    <location>
        <begin position="1"/>
        <end position="311"/>
    </location>
</feature>
<feature type="binding site" evidence="1">
    <location>
        <position position="130"/>
    </location>
    <ligand>
        <name>Mn(2+)</name>
        <dbReference type="ChEBI" id="CHEBI:29035"/>
        <label>1</label>
    </ligand>
</feature>
<feature type="binding site" evidence="1">
    <location>
        <position position="155"/>
    </location>
    <ligand>
        <name>Mn(2+)</name>
        <dbReference type="ChEBI" id="CHEBI:29035"/>
        <label>1</label>
    </ligand>
</feature>
<feature type="binding site" evidence="1">
    <location>
        <position position="155"/>
    </location>
    <ligand>
        <name>Mn(2+)</name>
        <dbReference type="ChEBI" id="CHEBI:29035"/>
        <label>2</label>
    </ligand>
</feature>
<feature type="binding site" evidence="1">
    <location>
        <position position="157"/>
    </location>
    <ligand>
        <name>Mn(2+)</name>
        <dbReference type="ChEBI" id="CHEBI:29035"/>
        <label>2</label>
    </ligand>
</feature>
<feature type="binding site" evidence="1">
    <location>
        <position position="159"/>
    </location>
    <ligand>
        <name>Mn(2+)</name>
        <dbReference type="ChEBI" id="CHEBI:29035"/>
        <label>1</label>
    </ligand>
</feature>
<feature type="binding site" evidence="1">
    <location>
        <position position="242"/>
    </location>
    <ligand>
        <name>Mn(2+)</name>
        <dbReference type="ChEBI" id="CHEBI:29035"/>
        <label>1</label>
    </ligand>
</feature>
<feature type="binding site" evidence="1">
    <location>
        <position position="242"/>
    </location>
    <ligand>
        <name>Mn(2+)</name>
        <dbReference type="ChEBI" id="CHEBI:29035"/>
        <label>2</label>
    </ligand>
</feature>
<feature type="binding site" evidence="1">
    <location>
        <position position="244"/>
    </location>
    <ligand>
        <name>Mn(2+)</name>
        <dbReference type="ChEBI" id="CHEBI:29035"/>
        <label>2</label>
    </ligand>
</feature>
<evidence type="ECO:0000255" key="1">
    <source>
        <dbReference type="HAMAP-Rule" id="MF_00737"/>
    </source>
</evidence>
<reference key="1">
    <citation type="journal article" date="2005" name="J. Bacteriol.">
        <title>Insights on evolution of virulence and resistance from the complete genome analysis of an early methicillin-resistant Staphylococcus aureus strain and a biofilm-producing methicillin-resistant Staphylococcus epidermidis strain.</title>
        <authorList>
            <person name="Gill S.R."/>
            <person name="Fouts D.E."/>
            <person name="Archer G.L."/>
            <person name="Mongodin E.F."/>
            <person name="DeBoy R.T."/>
            <person name="Ravel J."/>
            <person name="Paulsen I.T."/>
            <person name="Kolonay J.F."/>
            <person name="Brinkac L.M."/>
            <person name="Beanan M.J."/>
            <person name="Dodson R.J."/>
            <person name="Daugherty S.C."/>
            <person name="Madupu R."/>
            <person name="Angiuoli S.V."/>
            <person name="Durkin A.S."/>
            <person name="Haft D.H."/>
            <person name="Vamathevan J.J."/>
            <person name="Khouri H."/>
            <person name="Utterback T.R."/>
            <person name="Lee C."/>
            <person name="Dimitrov G."/>
            <person name="Jiang L."/>
            <person name="Qin H."/>
            <person name="Weidman J."/>
            <person name="Tran K."/>
            <person name="Kang K.H."/>
            <person name="Hance I.R."/>
            <person name="Nelson K.E."/>
            <person name="Fraser C.M."/>
        </authorList>
    </citation>
    <scope>NUCLEOTIDE SEQUENCE [LARGE SCALE GENOMIC DNA]</scope>
    <source>
        <strain>COL</strain>
    </source>
</reference>
<sequence length="311" mass="34513">MYKQGEPNLWTGRLDSETDPKKFRHFQTVTFEDLSKLEKSSMPSGVGILGYAVDKGVALNKGRIGAKEGPDAIKQAFAGLPDLNQCETLVDYGNVYHDHEELIDTQKEFAMLAAKSIANHRQTFLLGGGHDIAYAQYLATRKVYPTQSIGVINIDAHFDTRAEQQSTSGTSFRQILEEDENTDYLVLGIAQGGNTQSLFDYAKEKKIDYVFADELLSHVSPTIKDMIERFVHEHDVIMFTICMDVIDSAFAPGVSAPAVLGLYPHTVLELAKRIIPSDKVSSVSIAEMNPTYDADNRTAKLVANLVHHFLK</sequence>
<comment type="function">
    <text evidence="1">Catalyzes the conversion of N-formimidoyl-L-glutamate to L-glutamate and formamide.</text>
</comment>
<comment type="catalytic activity">
    <reaction evidence="1">
        <text>N-formimidoyl-L-glutamate + H2O = formamide + L-glutamate</text>
        <dbReference type="Rhea" id="RHEA:22492"/>
        <dbReference type="ChEBI" id="CHEBI:15377"/>
        <dbReference type="ChEBI" id="CHEBI:16397"/>
        <dbReference type="ChEBI" id="CHEBI:29985"/>
        <dbReference type="ChEBI" id="CHEBI:58928"/>
        <dbReference type="EC" id="3.5.3.8"/>
    </reaction>
</comment>
<comment type="cofactor">
    <cofactor evidence="1">
        <name>Mn(2+)</name>
        <dbReference type="ChEBI" id="CHEBI:29035"/>
    </cofactor>
    <text evidence="1">Binds 2 manganese ions per subunit.</text>
</comment>
<comment type="pathway">
    <text evidence="1">Amino-acid degradation; L-histidine degradation into L-glutamate; L-glutamate from N-formimidoyl-L-glutamate (hydrolase route): step 1/1.</text>
</comment>
<comment type="similarity">
    <text evidence="1">Belongs to the arginase family.</text>
</comment>